<reference key="1">
    <citation type="journal article" date="2001" name="Proc. Natl. Acad. Sci. U.S.A.">
        <title>Complete genome sequence of Caulobacter crescentus.</title>
        <authorList>
            <person name="Nierman W.C."/>
            <person name="Feldblyum T.V."/>
            <person name="Laub M.T."/>
            <person name="Paulsen I.T."/>
            <person name="Nelson K.E."/>
            <person name="Eisen J.A."/>
            <person name="Heidelberg J.F."/>
            <person name="Alley M.R.K."/>
            <person name="Ohta N."/>
            <person name="Maddock J.R."/>
            <person name="Potocka I."/>
            <person name="Nelson W.C."/>
            <person name="Newton A."/>
            <person name="Stephens C."/>
            <person name="Phadke N.D."/>
            <person name="Ely B."/>
            <person name="DeBoy R.T."/>
            <person name="Dodson R.J."/>
            <person name="Durkin A.S."/>
            <person name="Gwinn M.L."/>
            <person name="Haft D.H."/>
            <person name="Kolonay J.F."/>
            <person name="Smit J."/>
            <person name="Craven M.B."/>
            <person name="Khouri H.M."/>
            <person name="Shetty J."/>
            <person name="Berry K.J."/>
            <person name="Utterback T.R."/>
            <person name="Tran K."/>
            <person name="Wolf A.M."/>
            <person name="Vamathevan J.J."/>
            <person name="Ermolaeva M.D."/>
            <person name="White O."/>
            <person name="Salzberg S.L."/>
            <person name="Venter J.C."/>
            <person name="Shapiro L."/>
            <person name="Fraser C.M."/>
        </authorList>
    </citation>
    <scope>NUCLEOTIDE SEQUENCE [LARGE SCALE GENOMIC DNA]</scope>
    <source>
        <strain>ATCC 19089 / CIP 103742 / CB 15</strain>
    </source>
</reference>
<keyword id="KW-0120">Carbon dioxide fixation</keyword>
<keyword id="KW-0456">Lyase</keyword>
<keyword id="KW-0460">Magnesium</keyword>
<keyword id="KW-1185">Reference proteome</keyword>
<comment type="function">
    <text evidence="1">Forms oxaloacetate, a four-carbon dicarboxylic acid source for the tricarboxylic acid cycle.</text>
</comment>
<comment type="catalytic activity">
    <reaction evidence="1">
        <text>oxaloacetate + phosphate = phosphoenolpyruvate + hydrogencarbonate</text>
        <dbReference type="Rhea" id="RHEA:28370"/>
        <dbReference type="ChEBI" id="CHEBI:16452"/>
        <dbReference type="ChEBI" id="CHEBI:17544"/>
        <dbReference type="ChEBI" id="CHEBI:43474"/>
        <dbReference type="ChEBI" id="CHEBI:58702"/>
        <dbReference type="EC" id="4.1.1.31"/>
    </reaction>
</comment>
<comment type="cofactor">
    <cofactor evidence="1">
        <name>Mg(2+)</name>
        <dbReference type="ChEBI" id="CHEBI:18420"/>
    </cofactor>
</comment>
<comment type="similarity">
    <text evidence="1">Belongs to the PEPCase type 1 family.</text>
</comment>
<protein>
    <recommendedName>
        <fullName evidence="1">Phosphoenolpyruvate carboxylase</fullName>
        <shortName evidence="1">PEPC</shortName>
        <shortName evidence="1">PEPCase</shortName>
        <ecNumber evidence="1">4.1.1.31</ecNumber>
    </recommendedName>
</protein>
<dbReference type="EC" id="4.1.1.31" evidence="1"/>
<dbReference type="EMBL" id="AE005673">
    <property type="protein sequence ID" value="AAK23472.1"/>
    <property type="molecule type" value="Genomic_DNA"/>
</dbReference>
<dbReference type="PIR" id="D87434">
    <property type="entry name" value="D87434"/>
</dbReference>
<dbReference type="RefSeq" id="NP_420304.1">
    <property type="nucleotide sequence ID" value="NC_002696.2"/>
</dbReference>
<dbReference type="RefSeq" id="WP_010919367.1">
    <property type="nucleotide sequence ID" value="NC_002696.2"/>
</dbReference>
<dbReference type="SMR" id="Q9A871"/>
<dbReference type="STRING" id="190650.CC_1493"/>
<dbReference type="EnsemblBacteria" id="AAK23472">
    <property type="protein sequence ID" value="AAK23472"/>
    <property type="gene ID" value="CC_1493"/>
</dbReference>
<dbReference type="KEGG" id="ccr:CC_1493"/>
<dbReference type="PATRIC" id="fig|190650.5.peg.1520"/>
<dbReference type="eggNOG" id="COG2352">
    <property type="taxonomic scope" value="Bacteria"/>
</dbReference>
<dbReference type="HOGENOM" id="CLU_006557_2_0_5"/>
<dbReference type="BioCyc" id="CAULO:CC1493-MONOMER"/>
<dbReference type="Proteomes" id="UP000001816">
    <property type="component" value="Chromosome"/>
</dbReference>
<dbReference type="GO" id="GO:0005829">
    <property type="term" value="C:cytosol"/>
    <property type="evidence" value="ECO:0007669"/>
    <property type="project" value="TreeGrafter"/>
</dbReference>
<dbReference type="GO" id="GO:0000287">
    <property type="term" value="F:magnesium ion binding"/>
    <property type="evidence" value="ECO:0007669"/>
    <property type="project" value="UniProtKB-UniRule"/>
</dbReference>
<dbReference type="GO" id="GO:0008964">
    <property type="term" value="F:phosphoenolpyruvate carboxylase activity"/>
    <property type="evidence" value="ECO:0007669"/>
    <property type="project" value="UniProtKB-UniRule"/>
</dbReference>
<dbReference type="GO" id="GO:0015977">
    <property type="term" value="P:carbon fixation"/>
    <property type="evidence" value="ECO:0007669"/>
    <property type="project" value="UniProtKB-UniRule"/>
</dbReference>
<dbReference type="GO" id="GO:0006107">
    <property type="term" value="P:oxaloacetate metabolic process"/>
    <property type="evidence" value="ECO:0007669"/>
    <property type="project" value="UniProtKB-UniRule"/>
</dbReference>
<dbReference type="GO" id="GO:0006099">
    <property type="term" value="P:tricarboxylic acid cycle"/>
    <property type="evidence" value="ECO:0007669"/>
    <property type="project" value="InterPro"/>
</dbReference>
<dbReference type="Gene3D" id="1.20.1440.90">
    <property type="entry name" value="Phosphoenolpyruvate/pyruvate domain"/>
    <property type="match status" value="1"/>
</dbReference>
<dbReference type="HAMAP" id="MF_00595">
    <property type="entry name" value="PEPcase_type1"/>
    <property type="match status" value="1"/>
</dbReference>
<dbReference type="InterPro" id="IPR021135">
    <property type="entry name" value="PEP_COase"/>
</dbReference>
<dbReference type="InterPro" id="IPR022805">
    <property type="entry name" value="PEP_COase_bac/pln-type"/>
</dbReference>
<dbReference type="InterPro" id="IPR018129">
    <property type="entry name" value="PEP_COase_Lys_AS"/>
</dbReference>
<dbReference type="InterPro" id="IPR033129">
    <property type="entry name" value="PEPCASE_His_AS"/>
</dbReference>
<dbReference type="InterPro" id="IPR015813">
    <property type="entry name" value="Pyrv/PenolPyrv_kinase-like_dom"/>
</dbReference>
<dbReference type="NCBIfam" id="NF000584">
    <property type="entry name" value="PRK00009.1"/>
    <property type="match status" value="1"/>
</dbReference>
<dbReference type="PANTHER" id="PTHR30523">
    <property type="entry name" value="PHOSPHOENOLPYRUVATE CARBOXYLASE"/>
    <property type="match status" value="1"/>
</dbReference>
<dbReference type="PANTHER" id="PTHR30523:SF6">
    <property type="entry name" value="PHOSPHOENOLPYRUVATE CARBOXYLASE"/>
    <property type="match status" value="1"/>
</dbReference>
<dbReference type="Pfam" id="PF00311">
    <property type="entry name" value="PEPcase"/>
    <property type="match status" value="1"/>
</dbReference>
<dbReference type="PRINTS" id="PR00150">
    <property type="entry name" value="PEPCARBXLASE"/>
</dbReference>
<dbReference type="SUPFAM" id="SSF51621">
    <property type="entry name" value="Phosphoenolpyruvate/pyruvate domain"/>
    <property type="match status" value="1"/>
</dbReference>
<dbReference type="PROSITE" id="PS00781">
    <property type="entry name" value="PEPCASE_1"/>
    <property type="match status" value="1"/>
</dbReference>
<dbReference type="PROSITE" id="PS00393">
    <property type="entry name" value="PEPCASE_2"/>
    <property type="match status" value="1"/>
</dbReference>
<evidence type="ECO:0000255" key="1">
    <source>
        <dbReference type="HAMAP-Rule" id="MF_00595"/>
    </source>
</evidence>
<sequence length="909" mass="98874">MRNPALSIDVDRPTSRHVRQNAHLLSDLLIEAITYLEGEEKAELVAKARKAASREDVVNGDAPLLDHLFSDLTTEQAVFLARAFASHSLLANIGEDVAGRRRHAEADAQPGDERPRTLIDAVKALKAAGKSDAELAKIFAAMNVVPVLTAHPTEVRRRSMVDRETEISRLMALRRHHLPPDLEAEIRESLFREIALMWRTRLYRPERITVKDEIRNALSIVRTSILPAIIDLYGDWTGKIGQHGQLAPLLKMGSWLGGDRDGHPGVNGQTLKLALSSQSRVILDWYAGEVRKLWSNLAVSTAYTPVSDELLALAAQAKDPSVHRIDEPYRLALELIFDRLTAVSQKLTGAPVAFASGVTSVEPYAHPDAFVADLSVIIDSLERNGGERLVGSALRTLVEVAKACGFHLMSLDLRQNADVHERTLDELFRRAGTGVEYLKLDEDARCKVLIDELSHQRPLVSPFTAYGEETSKELATMEAAAQAVRDYGHGCLGAYIISKSATLSDMLEPLVLLKQVGLVWGGAAPRASVKVAPLFETIGDLENGPAVLRQWLELPLSRTILGDRPVQEIMLGYSDSNKDGGYVASRRGVATGASALAHEADRMGVGLQLFHGRGGSVGRGGGPAAEAVLAQPAGTVQGRIRMTEQGEMIARRFGDQPTARRNLDGLAAAVLMASERPIPKRDPKVEGAMTALAQSSFEGYRALVYDDAAFEDFFWSVTPISEIVGLNIGSRPASRTASRKIEDLRAIPWVFSWSQARFMLPGWYGFASGVERAGLSVEQLRDLAGNFDFFASLLSNMELALAQSQMGIAARYVALSPDKANAERIFATIRREHEAATGLALAIRGGAALLDNQPDLAESVALASRSVDPLNHLQLELLSRRRAGDIDEELRLAIQLTVAGIAAGLRNTG</sequence>
<feature type="chain" id="PRO_0000166586" description="Phosphoenolpyruvate carboxylase">
    <location>
        <begin position="1"/>
        <end position="909"/>
    </location>
</feature>
<feature type="active site" evidence="1">
    <location>
        <position position="151"/>
    </location>
</feature>
<feature type="active site" evidence="1">
    <location>
        <position position="578"/>
    </location>
</feature>
<accession>Q9A871</accession>
<name>CAPP_CAUVC</name>
<organism>
    <name type="scientific">Caulobacter vibrioides (strain ATCC 19089 / CIP 103742 / CB 15)</name>
    <name type="common">Caulobacter crescentus</name>
    <dbReference type="NCBI Taxonomy" id="190650"/>
    <lineage>
        <taxon>Bacteria</taxon>
        <taxon>Pseudomonadati</taxon>
        <taxon>Pseudomonadota</taxon>
        <taxon>Alphaproteobacteria</taxon>
        <taxon>Caulobacterales</taxon>
        <taxon>Caulobacteraceae</taxon>
        <taxon>Caulobacter</taxon>
    </lineage>
</organism>
<gene>
    <name evidence="1" type="primary">ppc</name>
    <name type="ordered locus">CC_1493</name>
</gene>
<proteinExistence type="inferred from homology"/>